<comment type="function">
    <text evidence="3">Catalyzes the production of 7-dehydrocholesterol (7-DHC or cholesta-5,7-dien-3beta-ol) by inserting a double bond (desaturating) at the C7-C8 single bond of cholesterol. Essential regulator of steroid biosynthesis as this reaction is the first step in the synthesis of the steroid hormone Delta(7)-dafachronic acid.</text>
</comment>
<comment type="catalytic activity">
    <reaction evidence="3">
        <text>cholesterol + NADPH + O2 + H(+) = 7-dehydrocholesterol + NADP(+) + 2 H2O</text>
        <dbReference type="Rhea" id="RHEA:45024"/>
        <dbReference type="ChEBI" id="CHEBI:15377"/>
        <dbReference type="ChEBI" id="CHEBI:15378"/>
        <dbReference type="ChEBI" id="CHEBI:15379"/>
        <dbReference type="ChEBI" id="CHEBI:16113"/>
        <dbReference type="ChEBI" id="CHEBI:17759"/>
        <dbReference type="ChEBI" id="CHEBI:57783"/>
        <dbReference type="ChEBI" id="CHEBI:58349"/>
        <dbReference type="EC" id="1.14.19.21"/>
    </reaction>
    <physiologicalReaction direction="left-to-right" evidence="6">
        <dbReference type="Rhea" id="RHEA:45025"/>
    </physiologicalReaction>
</comment>
<comment type="catalytic activity">
    <reaction evidence="3">
        <text>cholesterol + NADH + O2 + H(+) = 7-dehydrocholesterol + NAD(+) + 2 H2O</text>
        <dbReference type="Rhea" id="RHEA:51644"/>
        <dbReference type="ChEBI" id="CHEBI:15377"/>
        <dbReference type="ChEBI" id="CHEBI:15378"/>
        <dbReference type="ChEBI" id="CHEBI:15379"/>
        <dbReference type="ChEBI" id="CHEBI:16113"/>
        <dbReference type="ChEBI" id="CHEBI:17759"/>
        <dbReference type="ChEBI" id="CHEBI:57540"/>
        <dbReference type="ChEBI" id="CHEBI:57945"/>
        <dbReference type="EC" id="1.14.19.21"/>
    </reaction>
    <physiologicalReaction direction="left-to-right" evidence="6">
        <dbReference type="Rhea" id="RHEA:51645"/>
    </physiologicalReaction>
</comment>
<comment type="cofactor">
    <cofactor evidence="2">
        <name>[2Fe-2S] cluster</name>
        <dbReference type="ChEBI" id="CHEBI:190135"/>
    </cofactor>
    <text evidence="2">Binds 1 [2Fe-2S] cluster per subunit.</text>
</comment>
<comment type="pathway">
    <text evidence="6">Steroid hormone biosynthesis; dafachronic acid biosynthesis.</text>
</comment>
<comment type="subcellular location">
    <subcellularLocation>
        <location evidence="1">Membrane</location>
        <topology evidence="1">Single-pass membrane protein</topology>
    </subcellularLocation>
</comment>
<comment type="similarity">
    <text evidence="5">Belongs to the cholesterol 7-desaturase family.</text>
</comment>
<evidence type="ECO:0000255" key="1"/>
<evidence type="ECO:0000255" key="2">
    <source>
        <dbReference type="PROSITE-ProRule" id="PRU00628"/>
    </source>
</evidence>
<evidence type="ECO:0000269" key="3">
    <source>
    </source>
</evidence>
<evidence type="ECO:0000303" key="4">
    <source>
    </source>
</evidence>
<evidence type="ECO:0000305" key="5"/>
<evidence type="ECO:0000305" key="6">
    <source>
    </source>
</evidence>
<evidence type="ECO:0000312" key="7">
    <source>
        <dbReference type="EMBL" id="BAK39963.1"/>
    </source>
</evidence>
<name>NVD_HEMPU</name>
<organism>
    <name type="scientific">Hemicentrotus pulcherrimus</name>
    <name type="common">Sea urchin</name>
    <name type="synonym">Strongylocentrotus pulcherrimus</name>
    <dbReference type="NCBI Taxonomy" id="7650"/>
    <lineage>
        <taxon>Eukaryota</taxon>
        <taxon>Metazoa</taxon>
        <taxon>Echinodermata</taxon>
        <taxon>Eleutherozoa</taxon>
        <taxon>Echinozoa</taxon>
        <taxon>Echinoidea</taxon>
        <taxon>Euechinoidea</taxon>
        <taxon>Echinacea</taxon>
        <taxon>Camarodonta</taxon>
        <taxon>Echinidea</taxon>
        <taxon>Strongylocentrotidae</taxon>
        <taxon>Hemicentrotus</taxon>
    </lineage>
</organism>
<dbReference type="EC" id="1.14.19.21" evidence="3"/>
<dbReference type="EMBL" id="AB607954">
    <property type="protein sequence ID" value="BAK39963.1"/>
    <property type="molecule type" value="mRNA"/>
</dbReference>
<dbReference type="SMR" id="F7J188"/>
<dbReference type="SwissLipids" id="SLP:000001123"/>
<dbReference type="BRENDA" id="1.14.19.21">
    <property type="organism ID" value="2635"/>
</dbReference>
<dbReference type="UniPathway" id="UPA01020"/>
<dbReference type="GO" id="GO:0005737">
    <property type="term" value="C:cytoplasm"/>
    <property type="evidence" value="ECO:0007669"/>
    <property type="project" value="TreeGrafter"/>
</dbReference>
<dbReference type="GO" id="GO:0016020">
    <property type="term" value="C:membrane"/>
    <property type="evidence" value="ECO:0007669"/>
    <property type="project" value="UniProtKB-SubCell"/>
</dbReference>
<dbReference type="GO" id="GO:0051537">
    <property type="term" value="F:2 iron, 2 sulfur cluster binding"/>
    <property type="evidence" value="ECO:0007669"/>
    <property type="project" value="UniProtKB-KW"/>
</dbReference>
<dbReference type="GO" id="GO:0170056">
    <property type="term" value="F:cholesterol 7-desaturase (NAD(P)H) activity"/>
    <property type="evidence" value="ECO:0007669"/>
    <property type="project" value="UniProtKB-EC"/>
</dbReference>
<dbReference type="GO" id="GO:0046872">
    <property type="term" value="F:metal ion binding"/>
    <property type="evidence" value="ECO:0007669"/>
    <property type="project" value="UniProtKB-KW"/>
</dbReference>
<dbReference type="GO" id="GO:0008203">
    <property type="term" value="P:cholesterol metabolic process"/>
    <property type="evidence" value="ECO:0007669"/>
    <property type="project" value="UniProtKB-KW"/>
</dbReference>
<dbReference type="Gene3D" id="3.90.380.10">
    <property type="entry name" value="Naphthalene 1,2-dioxygenase Alpha Subunit, Chain A, domain 1"/>
    <property type="match status" value="1"/>
</dbReference>
<dbReference type="Gene3D" id="2.102.10.10">
    <property type="entry name" value="Rieske [2Fe-2S] iron-sulphur domain"/>
    <property type="match status" value="1"/>
</dbReference>
<dbReference type="InterPro" id="IPR050584">
    <property type="entry name" value="Cholesterol_7-desaturase"/>
</dbReference>
<dbReference type="InterPro" id="IPR045605">
    <property type="entry name" value="KshA-like_C"/>
</dbReference>
<dbReference type="InterPro" id="IPR017941">
    <property type="entry name" value="Rieske_2Fe-2S"/>
</dbReference>
<dbReference type="InterPro" id="IPR036922">
    <property type="entry name" value="Rieske_2Fe-2S_sf"/>
</dbReference>
<dbReference type="PANTHER" id="PTHR21266:SF32">
    <property type="entry name" value="CHOLESTEROL 7-DESATURASE NVD"/>
    <property type="match status" value="1"/>
</dbReference>
<dbReference type="PANTHER" id="PTHR21266">
    <property type="entry name" value="IRON-SULFUR DOMAIN CONTAINING PROTEIN"/>
    <property type="match status" value="1"/>
</dbReference>
<dbReference type="Pfam" id="PF19298">
    <property type="entry name" value="KshA_C"/>
    <property type="match status" value="1"/>
</dbReference>
<dbReference type="Pfam" id="PF00355">
    <property type="entry name" value="Rieske"/>
    <property type="match status" value="1"/>
</dbReference>
<dbReference type="SUPFAM" id="SSF55961">
    <property type="entry name" value="Bet v1-like"/>
    <property type="match status" value="1"/>
</dbReference>
<dbReference type="SUPFAM" id="SSF50022">
    <property type="entry name" value="ISP domain"/>
    <property type="match status" value="1"/>
</dbReference>
<dbReference type="PROSITE" id="PS51296">
    <property type="entry name" value="RIESKE"/>
    <property type="match status" value="1"/>
</dbReference>
<keyword id="KW-0001">2Fe-2S</keyword>
<keyword id="KW-0153">Cholesterol metabolism</keyword>
<keyword id="KW-0408">Iron</keyword>
<keyword id="KW-0411">Iron-sulfur</keyword>
<keyword id="KW-0443">Lipid metabolism</keyword>
<keyword id="KW-0472">Membrane</keyword>
<keyword id="KW-0479">Metal-binding</keyword>
<keyword id="KW-0560">Oxidoreductase</keyword>
<keyword id="KW-0732">Signal</keyword>
<keyword id="KW-0753">Steroid metabolism</keyword>
<keyword id="KW-1207">Sterol metabolism</keyword>
<keyword id="KW-0812">Transmembrane</keyword>
<keyword id="KW-1133">Transmembrane helix</keyword>
<protein>
    <recommendedName>
        <fullName>Cholesterol 7-desaturase nvd</fullName>
        <ecNumber evidence="3">1.14.19.21</ecNumber>
    </recommendedName>
    <alternativeName>
        <fullName evidence="4">Neverland</fullName>
        <shortName evidence="4">Nvd_Hp</shortName>
    </alternativeName>
</protein>
<feature type="signal peptide" evidence="1">
    <location>
        <begin position="1"/>
        <end position="25"/>
    </location>
</feature>
<feature type="chain" id="PRO_5003363022" description="Cholesterol 7-desaturase nvd">
    <location>
        <begin position="26"/>
        <end position="469"/>
    </location>
</feature>
<feature type="transmembrane region" description="Helical" evidence="1">
    <location>
        <begin position="58"/>
        <end position="78"/>
    </location>
</feature>
<feature type="domain" description="Rieske" evidence="2">
    <location>
        <begin position="132"/>
        <end position="238"/>
    </location>
</feature>
<feature type="binding site" evidence="2">
    <location>
        <position position="172"/>
    </location>
    <ligand>
        <name>[2Fe-2S] cluster</name>
        <dbReference type="ChEBI" id="CHEBI:190135"/>
    </ligand>
</feature>
<feature type="binding site" evidence="2">
    <location>
        <position position="174"/>
    </location>
    <ligand>
        <name>[2Fe-2S] cluster</name>
        <dbReference type="ChEBI" id="CHEBI:190135"/>
    </ligand>
</feature>
<feature type="binding site" evidence="2">
    <location>
        <position position="192"/>
    </location>
    <ligand>
        <name>[2Fe-2S] cluster</name>
        <dbReference type="ChEBI" id="CHEBI:190135"/>
    </ligand>
</feature>
<feature type="binding site" evidence="2">
    <location>
        <position position="195"/>
    </location>
    <ligand>
        <name>[2Fe-2S] cluster</name>
        <dbReference type="ChEBI" id="CHEBI:190135"/>
    </ligand>
</feature>
<reference evidence="7" key="1">
    <citation type="journal article" date="2011" name="J. Biol. Chem.">
        <title>The conserved Rieske oxygenase DAF-36/Neverland is a novel cholesterol-metabolizing enzyme.</title>
        <authorList>
            <person name="Yoshiyama-Yanagawa T."/>
            <person name="Enya S."/>
            <person name="Shimada-Niwa Y."/>
            <person name="Yaguchi S."/>
            <person name="Haramoto Y."/>
            <person name="Matsuya T."/>
            <person name="Shiomi K."/>
            <person name="Sasakura Y."/>
            <person name="Takahashi S."/>
            <person name="Asashima M."/>
            <person name="Kataoka H."/>
            <person name="Niwa R."/>
        </authorList>
    </citation>
    <scope>NUCLEOTIDE SEQUENCE [MRNA]</scope>
    <scope>FUNCTION</scope>
    <scope>CATALYTIC ACTIVITY</scope>
    <scope>PATHWAY</scope>
    <source>
        <tissue>Embryo</tissue>
    </source>
</reference>
<sequence length="469" mass="53055">MASFCASKFLPGLLMLGLGLAVALASSTPTLSLLKDNLKVMNMPLGDWLHILATNFTNFVASQTLLTLTIFGVASFILRYLYQLFLKPLNLDRALGDVGYVLDGKKKRDVVNDIRRRRKSGDLPPIYPNGWIPLVASQDLVKGDVKYISAVGNEFAVYRGEDGEAYAVDAYCPHLGANMAIGGMVKGNCLTCPFHGWVFEGKEGKCVDIPYQEKGKSVPAQAKVKSWSVIEQNGFVLVWHDVEGREPSWFPENIEEEKWGKMYYHGTTKHTVCAHVEEISENGADCAHLTFVHGAFMGSGNDLRYMGSKLWSWASHSWGGKWEQDPDHKHVGVMTVYHAFSLFGMPIEVTRTESTARQNGPAHVLLSFSLPFGKATIAIGVTPIEPLTQIVTQHVYASRFIPRWLAKSFLYAEYVQFERDIMVWNYKTYQRKPLLVFEDRLISKHRRWYSQFFSENSPKFEDMKKTLDW</sequence>
<proteinExistence type="evidence at protein level"/>
<gene>
    <name evidence="7" type="primary">nvd-Hp</name>
</gene>
<accession>F7J188</accession>